<reference key="1">
    <citation type="submission" date="2007-02" db="EMBL/GenBank/DDBJ databases">
        <title>Complete sequence of chromosome 1 of Rhodobacter sphaeroides ATCC 17029.</title>
        <authorList>
            <person name="Copeland A."/>
            <person name="Lucas S."/>
            <person name="Lapidus A."/>
            <person name="Barry K."/>
            <person name="Detter J.C."/>
            <person name="Glavina del Rio T."/>
            <person name="Hammon N."/>
            <person name="Israni S."/>
            <person name="Dalin E."/>
            <person name="Tice H."/>
            <person name="Pitluck S."/>
            <person name="Kiss H."/>
            <person name="Brettin T."/>
            <person name="Bruce D."/>
            <person name="Han C."/>
            <person name="Tapia R."/>
            <person name="Gilna P."/>
            <person name="Schmutz J."/>
            <person name="Larimer F."/>
            <person name="Land M."/>
            <person name="Hauser L."/>
            <person name="Kyrpides N."/>
            <person name="Mikhailova N."/>
            <person name="Richardson P."/>
            <person name="Mackenzie C."/>
            <person name="Choudhary M."/>
            <person name="Donohue T.J."/>
            <person name="Kaplan S."/>
        </authorList>
    </citation>
    <scope>NUCLEOTIDE SEQUENCE [LARGE SCALE GENOMIC DNA]</scope>
    <source>
        <strain>ATCC 17029 / ATH 2.4.9</strain>
    </source>
</reference>
<organism>
    <name type="scientific">Cereibacter sphaeroides (strain ATCC 17029 / ATH 2.4.9)</name>
    <name type="common">Rhodobacter sphaeroides</name>
    <dbReference type="NCBI Taxonomy" id="349101"/>
    <lineage>
        <taxon>Bacteria</taxon>
        <taxon>Pseudomonadati</taxon>
        <taxon>Pseudomonadota</taxon>
        <taxon>Alphaproteobacteria</taxon>
        <taxon>Rhodobacterales</taxon>
        <taxon>Paracoccaceae</taxon>
        <taxon>Cereibacter</taxon>
    </lineage>
</organism>
<sequence length="246" mass="26738">MTSEAAPASTAVTYKRVMLKISGEALMGDQGYGLHPPTVQRIAREVQAVHRLGVEICMVIGGGNIFRGLQGSAQGMERTTADYMGMLATVMNALAMQAALESLGIFTRVISAIPMDQVCEPYIRRRAVRHLEKKRVCIFAAGTGNPYFTTDTAATLRANEMACQAIFKGTKVDGVYDKDPRKFADAKRYETVSYDECLQKHLGVMDASAIALARDNDLPIIVFSLDEPGGFCGILRGEGTYTRVQG</sequence>
<protein>
    <recommendedName>
        <fullName evidence="1">Uridylate kinase</fullName>
        <shortName evidence="1">UK</shortName>
        <ecNumber evidence="1">2.7.4.22</ecNumber>
    </recommendedName>
    <alternativeName>
        <fullName evidence="1">Uridine monophosphate kinase</fullName>
        <shortName evidence="1">UMP kinase</shortName>
        <shortName evidence="1">UMPK</shortName>
    </alternativeName>
</protein>
<gene>
    <name evidence="1" type="primary">pyrH</name>
    <name type="ordered locus">Rsph17029_1362</name>
</gene>
<name>PYRH_CERS1</name>
<evidence type="ECO:0000255" key="1">
    <source>
        <dbReference type="HAMAP-Rule" id="MF_01220"/>
    </source>
</evidence>
<keyword id="KW-0021">Allosteric enzyme</keyword>
<keyword id="KW-0067">ATP-binding</keyword>
<keyword id="KW-0963">Cytoplasm</keyword>
<keyword id="KW-0418">Kinase</keyword>
<keyword id="KW-0547">Nucleotide-binding</keyword>
<keyword id="KW-0665">Pyrimidine biosynthesis</keyword>
<keyword id="KW-0808">Transferase</keyword>
<comment type="function">
    <text evidence="1">Catalyzes the reversible phosphorylation of UMP to UDP.</text>
</comment>
<comment type="catalytic activity">
    <reaction evidence="1">
        <text>UMP + ATP = UDP + ADP</text>
        <dbReference type="Rhea" id="RHEA:24400"/>
        <dbReference type="ChEBI" id="CHEBI:30616"/>
        <dbReference type="ChEBI" id="CHEBI:57865"/>
        <dbReference type="ChEBI" id="CHEBI:58223"/>
        <dbReference type="ChEBI" id="CHEBI:456216"/>
        <dbReference type="EC" id="2.7.4.22"/>
    </reaction>
</comment>
<comment type="activity regulation">
    <text evidence="1">Allosterically activated by GTP. Inhibited by UTP.</text>
</comment>
<comment type="pathway">
    <text evidence="1">Pyrimidine metabolism; CTP biosynthesis via de novo pathway; UDP from UMP (UMPK route): step 1/1.</text>
</comment>
<comment type="subunit">
    <text evidence="1">Homohexamer.</text>
</comment>
<comment type="subcellular location">
    <subcellularLocation>
        <location evidence="1">Cytoplasm</location>
    </subcellularLocation>
</comment>
<comment type="similarity">
    <text evidence="1">Belongs to the UMP kinase family.</text>
</comment>
<feature type="chain" id="PRO_0000323935" description="Uridylate kinase">
    <location>
        <begin position="1"/>
        <end position="246"/>
    </location>
</feature>
<feature type="region of interest" description="Involved in allosteric activation by GTP" evidence="1">
    <location>
        <begin position="28"/>
        <end position="33"/>
    </location>
</feature>
<feature type="binding site" evidence="1">
    <location>
        <begin position="20"/>
        <end position="23"/>
    </location>
    <ligand>
        <name>ATP</name>
        <dbReference type="ChEBI" id="CHEBI:30616"/>
    </ligand>
</feature>
<feature type="binding site" evidence="1">
    <location>
        <position position="62"/>
    </location>
    <ligand>
        <name>UMP</name>
        <dbReference type="ChEBI" id="CHEBI:57865"/>
    </ligand>
</feature>
<feature type="binding site" evidence="1">
    <location>
        <position position="63"/>
    </location>
    <ligand>
        <name>ATP</name>
        <dbReference type="ChEBI" id="CHEBI:30616"/>
    </ligand>
</feature>
<feature type="binding site" evidence="1">
    <location>
        <position position="67"/>
    </location>
    <ligand>
        <name>ATP</name>
        <dbReference type="ChEBI" id="CHEBI:30616"/>
    </ligand>
</feature>
<feature type="binding site" evidence="1">
    <location>
        <position position="82"/>
    </location>
    <ligand>
        <name>UMP</name>
        <dbReference type="ChEBI" id="CHEBI:57865"/>
    </ligand>
</feature>
<feature type="binding site" evidence="1">
    <location>
        <begin position="143"/>
        <end position="150"/>
    </location>
    <ligand>
        <name>UMP</name>
        <dbReference type="ChEBI" id="CHEBI:57865"/>
    </ligand>
</feature>
<feature type="binding site" evidence="1">
    <location>
        <position position="170"/>
    </location>
    <ligand>
        <name>ATP</name>
        <dbReference type="ChEBI" id="CHEBI:30616"/>
    </ligand>
</feature>
<feature type="binding site" evidence="1">
    <location>
        <position position="176"/>
    </location>
    <ligand>
        <name>ATP</name>
        <dbReference type="ChEBI" id="CHEBI:30616"/>
    </ligand>
</feature>
<feature type="binding site" evidence="1">
    <location>
        <position position="179"/>
    </location>
    <ligand>
        <name>ATP</name>
        <dbReference type="ChEBI" id="CHEBI:30616"/>
    </ligand>
</feature>
<accession>A3PJF6</accession>
<dbReference type="EC" id="2.7.4.22" evidence="1"/>
<dbReference type="EMBL" id="CP000577">
    <property type="protein sequence ID" value="ABN76472.1"/>
    <property type="molecule type" value="Genomic_DNA"/>
</dbReference>
<dbReference type="RefSeq" id="WP_002719855.1">
    <property type="nucleotide sequence ID" value="NC_009049.1"/>
</dbReference>
<dbReference type="SMR" id="A3PJF6"/>
<dbReference type="GeneID" id="67446454"/>
<dbReference type="KEGG" id="rsh:Rsph17029_1362"/>
<dbReference type="HOGENOM" id="CLU_033861_0_0_5"/>
<dbReference type="UniPathway" id="UPA00159">
    <property type="reaction ID" value="UER00275"/>
</dbReference>
<dbReference type="GO" id="GO:0005737">
    <property type="term" value="C:cytoplasm"/>
    <property type="evidence" value="ECO:0007669"/>
    <property type="project" value="UniProtKB-SubCell"/>
</dbReference>
<dbReference type="GO" id="GO:0005524">
    <property type="term" value="F:ATP binding"/>
    <property type="evidence" value="ECO:0007669"/>
    <property type="project" value="UniProtKB-KW"/>
</dbReference>
<dbReference type="GO" id="GO:0033862">
    <property type="term" value="F:UMP kinase activity"/>
    <property type="evidence" value="ECO:0007669"/>
    <property type="project" value="UniProtKB-EC"/>
</dbReference>
<dbReference type="GO" id="GO:0044210">
    <property type="term" value="P:'de novo' CTP biosynthetic process"/>
    <property type="evidence" value="ECO:0007669"/>
    <property type="project" value="UniProtKB-UniRule"/>
</dbReference>
<dbReference type="GO" id="GO:0006225">
    <property type="term" value="P:UDP biosynthetic process"/>
    <property type="evidence" value="ECO:0007669"/>
    <property type="project" value="TreeGrafter"/>
</dbReference>
<dbReference type="CDD" id="cd04254">
    <property type="entry name" value="AAK_UMPK-PyrH-Ec"/>
    <property type="match status" value="1"/>
</dbReference>
<dbReference type="FunFam" id="3.40.1160.10:FF:000001">
    <property type="entry name" value="Uridylate kinase"/>
    <property type="match status" value="1"/>
</dbReference>
<dbReference type="Gene3D" id="3.40.1160.10">
    <property type="entry name" value="Acetylglutamate kinase-like"/>
    <property type="match status" value="1"/>
</dbReference>
<dbReference type="HAMAP" id="MF_01220_B">
    <property type="entry name" value="PyrH_B"/>
    <property type="match status" value="1"/>
</dbReference>
<dbReference type="InterPro" id="IPR036393">
    <property type="entry name" value="AceGlu_kinase-like_sf"/>
</dbReference>
<dbReference type="InterPro" id="IPR001048">
    <property type="entry name" value="Asp/Glu/Uridylate_kinase"/>
</dbReference>
<dbReference type="InterPro" id="IPR011817">
    <property type="entry name" value="Uridylate_kinase"/>
</dbReference>
<dbReference type="InterPro" id="IPR015963">
    <property type="entry name" value="Uridylate_kinase_bac"/>
</dbReference>
<dbReference type="NCBIfam" id="TIGR02075">
    <property type="entry name" value="pyrH_bact"/>
    <property type="match status" value="1"/>
</dbReference>
<dbReference type="PANTHER" id="PTHR42833">
    <property type="entry name" value="URIDYLATE KINASE"/>
    <property type="match status" value="1"/>
</dbReference>
<dbReference type="PANTHER" id="PTHR42833:SF4">
    <property type="entry name" value="URIDYLATE KINASE PUMPKIN, CHLOROPLASTIC"/>
    <property type="match status" value="1"/>
</dbReference>
<dbReference type="Pfam" id="PF00696">
    <property type="entry name" value="AA_kinase"/>
    <property type="match status" value="1"/>
</dbReference>
<dbReference type="PIRSF" id="PIRSF005650">
    <property type="entry name" value="Uridylate_kin"/>
    <property type="match status" value="1"/>
</dbReference>
<dbReference type="SUPFAM" id="SSF53633">
    <property type="entry name" value="Carbamate kinase-like"/>
    <property type="match status" value="1"/>
</dbReference>
<proteinExistence type="inferred from homology"/>